<feature type="chain" id="PRO_0000241156" description="Glutamyl-tRNA(Gln) amidotransferase subunit A">
    <location>
        <begin position="1"/>
        <end position="485"/>
    </location>
</feature>
<feature type="active site" description="Charge relay system" evidence="1">
    <location>
        <position position="79"/>
    </location>
</feature>
<feature type="active site" description="Charge relay system" evidence="1">
    <location>
        <position position="154"/>
    </location>
</feature>
<feature type="active site" description="Acyl-ester intermediate" evidence="1">
    <location>
        <position position="178"/>
    </location>
</feature>
<accession>Q4L7L4</accession>
<protein>
    <recommendedName>
        <fullName evidence="1">Glutamyl-tRNA(Gln) amidotransferase subunit A</fullName>
        <shortName evidence="1">Glu-ADT subunit A</shortName>
        <ecNumber evidence="1">6.3.5.7</ecNumber>
    </recommendedName>
</protein>
<keyword id="KW-0067">ATP-binding</keyword>
<keyword id="KW-0436">Ligase</keyword>
<keyword id="KW-0547">Nucleotide-binding</keyword>
<keyword id="KW-0648">Protein biosynthesis</keyword>
<name>GATA_STAHJ</name>
<sequence>MSIRYESVEKLSEMIKNNEIKPSEVVKDIYDAIEETDPTIKSFLALDKDNAIKKAKELDELQAKGQMEGKLFGIPMGIKDNIITKDVETTCASKMLEGFVPIYESTVMNKLHDENAILIGKLNMDEFAMGGSTETSYFKQTVNPFDHTAVPGGSSGGSAAAVAAGLVPFSLGSDTGGSIRQPAAYCGVVGMKPTYGRVSRFGLVAFASSLDQIGPITRNVKDNAIVLETISGVDRNDSTSAPVEDVDFTSEIGKDIKGLKVALPKEYLGEGINEDVKEAVKNAVETLKSLGAEVDEVSLPNTKYGIPSYYVIASSEASANLARFDGIRYGYHSKEAQSLEELYKMSRSEGFGAEVKRRIFLGTFALSSGYYDAYYKKSQKVRTLIKNDFDKVFENYDVVVGPTAPTTAFNLGDEIDDPLTMYANDLLTTPVNLAGLPGISVPCGQSNGRPIGLQFIGKPFDEKTLYRVAYQYETQFNLHDAYEKL</sequence>
<organism>
    <name type="scientific">Staphylococcus haemolyticus (strain JCSC1435)</name>
    <dbReference type="NCBI Taxonomy" id="279808"/>
    <lineage>
        <taxon>Bacteria</taxon>
        <taxon>Bacillati</taxon>
        <taxon>Bacillota</taxon>
        <taxon>Bacilli</taxon>
        <taxon>Bacillales</taxon>
        <taxon>Staphylococcaceae</taxon>
        <taxon>Staphylococcus</taxon>
    </lineage>
</organism>
<reference key="1">
    <citation type="journal article" date="2005" name="J. Bacteriol.">
        <title>Whole-genome sequencing of Staphylococcus haemolyticus uncovers the extreme plasticity of its genome and the evolution of human-colonizing staphylococcal species.</title>
        <authorList>
            <person name="Takeuchi F."/>
            <person name="Watanabe S."/>
            <person name="Baba T."/>
            <person name="Yuzawa H."/>
            <person name="Ito T."/>
            <person name="Morimoto Y."/>
            <person name="Kuroda M."/>
            <person name="Cui L."/>
            <person name="Takahashi M."/>
            <person name="Ankai A."/>
            <person name="Baba S."/>
            <person name="Fukui S."/>
            <person name="Lee J.C."/>
            <person name="Hiramatsu K."/>
        </authorList>
    </citation>
    <scope>NUCLEOTIDE SEQUENCE [LARGE SCALE GENOMIC DNA]</scope>
    <source>
        <strain>JCSC1435</strain>
    </source>
</reference>
<gene>
    <name evidence="1" type="primary">gatA</name>
    <name type="ordered locus">SH1052</name>
</gene>
<evidence type="ECO:0000255" key="1">
    <source>
        <dbReference type="HAMAP-Rule" id="MF_00120"/>
    </source>
</evidence>
<comment type="function">
    <text evidence="1">Allows the formation of correctly charged Gln-tRNA(Gln) through the transamidation of misacylated Glu-tRNA(Gln) in organisms which lack glutaminyl-tRNA synthetase. The reaction takes place in the presence of glutamine and ATP through an activated gamma-phospho-Glu-tRNA(Gln).</text>
</comment>
<comment type="catalytic activity">
    <reaction evidence="1">
        <text>L-glutamyl-tRNA(Gln) + L-glutamine + ATP + H2O = L-glutaminyl-tRNA(Gln) + L-glutamate + ADP + phosphate + H(+)</text>
        <dbReference type="Rhea" id="RHEA:17521"/>
        <dbReference type="Rhea" id="RHEA-COMP:9681"/>
        <dbReference type="Rhea" id="RHEA-COMP:9684"/>
        <dbReference type="ChEBI" id="CHEBI:15377"/>
        <dbReference type="ChEBI" id="CHEBI:15378"/>
        <dbReference type="ChEBI" id="CHEBI:29985"/>
        <dbReference type="ChEBI" id="CHEBI:30616"/>
        <dbReference type="ChEBI" id="CHEBI:43474"/>
        <dbReference type="ChEBI" id="CHEBI:58359"/>
        <dbReference type="ChEBI" id="CHEBI:78520"/>
        <dbReference type="ChEBI" id="CHEBI:78521"/>
        <dbReference type="ChEBI" id="CHEBI:456216"/>
        <dbReference type="EC" id="6.3.5.7"/>
    </reaction>
</comment>
<comment type="subunit">
    <text evidence="1">Heterotrimer of A, B and C subunits.</text>
</comment>
<comment type="similarity">
    <text evidence="1">Belongs to the amidase family. GatA subfamily.</text>
</comment>
<proteinExistence type="inferred from homology"/>
<dbReference type="EC" id="6.3.5.7" evidence="1"/>
<dbReference type="EMBL" id="AP006716">
    <property type="protein sequence ID" value="BAE04361.1"/>
    <property type="molecule type" value="Genomic_DNA"/>
</dbReference>
<dbReference type="RefSeq" id="WP_011275357.1">
    <property type="nucleotide sequence ID" value="NC_007168.1"/>
</dbReference>
<dbReference type="SMR" id="Q4L7L4"/>
<dbReference type="KEGG" id="sha:SH1052"/>
<dbReference type="eggNOG" id="COG0154">
    <property type="taxonomic scope" value="Bacteria"/>
</dbReference>
<dbReference type="HOGENOM" id="CLU_009600_0_3_9"/>
<dbReference type="OrthoDB" id="9811471at2"/>
<dbReference type="Proteomes" id="UP000000543">
    <property type="component" value="Chromosome"/>
</dbReference>
<dbReference type="GO" id="GO:0030956">
    <property type="term" value="C:glutamyl-tRNA(Gln) amidotransferase complex"/>
    <property type="evidence" value="ECO:0007669"/>
    <property type="project" value="InterPro"/>
</dbReference>
<dbReference type="GO" id="GO:0005524">
    <property type="term" value="F:ATP binding"/>
    <property type="evidence" value="ECO:0007669"/>
    <property type="project" value="UniProtKB-KW"/>
</dbReference>
<dbReference type="GO" id="GO:0050567">
    <property type="term" value="F:glutaminyl-tRNA synthase (glutamine-hydrolyzing) activity"/>
    <property type="evidence" value="ECO:0007669"/>
    <property type="project" value="UniProtKB-UniRule"/>
</dbReference>
<dbReference type="GO" id="GO:0006412">
    <property type="term" value="P:translation"/>
    <property type="evidence" value="ECO:0007669"/>
    <property type="project" value="UniProtKB-UniRule"/>
</dbReference>
<dbReference type="Gene3D" id="3.90.1300.10">
    <property type="entry name" value="Amidase signature (AS) domain"/>
    <property type="match status" value="1"/>
</dbReference>
<dbReference type="HAMAP" id="MF_00120">
    <property type="entry name" value="GatA"/>
    <property type="match status" value="1"/>
</dbReference>
<dbReference type="InterPro" id="IPR000120">
    <property type="entry name" value="Amidase"/>
</dbReference>
<dbReference type="InterPro" id="IPR020556">
    <property type="entry name" value="Amidase_CS"/>
</dbReference>
<dbReference type="InterPro" id="IPR023631">
    <property type="entry name" value="Amidase_dom"/>
</dbReference>
<dbReference type="InterPro" id="IPR036928">
    <property type="entry name" value="AS_sf"/>
</dbReference>
<dbReference type="InterPro" id="IPR004412">
    <property type="entry name" value="GatA"/>
</dbReference>
<dbReference type="NCBIfam" id="TIGR00132">
    <property type="entry name" value="gatA"/>
    <property type="match status" value="1"/>
</dbReference>
<dbReference type="PANTHER" id="PTHR11895:SF151">
    <property type="entry name" value="GLUTAMYL-TRNA(GLN) AMIDOTRANSFERASE SUBUNIT A"/>
    <property type="match status" value="1"/>
</dbReference>
<dbReference type="PANTHER" id="PTHR11895">
    <property type="entry name" value="TRANSAMIDASE"/>
    <property type="match status" value="1"/>
</dbReference>
<dbReference type="Pfam" id="PF01425">
    <property type="entry name" value="Amidase"/>
    <property type="match status" value="1"/>
</dbReference>
<dbReference type="SUPFAM" id="SSF75304">
    <property type="entry name" value="Amidase signature (AS) enzymes"/>
    <property type="match status" value="1"/>
</dbReference>
<dbReference type="PROSITE" id="PS00571">
    <property type="entry name" value="AMIDASES"/>
    <property type="match status" value="1"/>
</dbReference>